<protein>
    <recommendedName>
        <fullName evidence="1">Small, acid-soluble spore protein O</fullName>
        <shortName evidence="1">SASP O</shortName>
    </recommendedName>
</protein>
<name>SSPO_BACC1</name>
<accession>Q733M2</accession>
<organism>
    <name type="scientific">Bacillus cereus (strain ATCC 10987 / NRS 248)</name>
    <dbReference type="NCBI Taxonomy" id="222523"/>
    <lineage>
        <taxon>Bacteria</taxon>
        <taxon>Bacillati</taxon>
        <taxon>Bacillota</taxon>
        <taxon>Bacilli</taxon>
        <taxon>Bacillales</taxon>
        <taxon>Bacillaceae</taxon>
        <taxon>Bacillus</taxon>
        <taxon>Bacillus cereus group</taxon>
    </lineage>
</organism>
<keyword id="KW-0749">Sporulation</keyword>
<dbReference type="EMBL" id="AE017194">
    <property type="protein sequence ID" value="AAS42541.1"/>
    <property type="molecule type" value="Genomic_DNA"/>
</dbReference>
<dbReference type="KEGG" id="bca:BCE_3636"/>
<dbReference type="HOGENOM" id="CLU_206342_0_0_9"/>
<dbReference type="Proteomes" id="UP000002527">
    <property type="component" value="Chromosome"/>
</dbReference>
<dbReference type="GO" id="GO:0042601">
    <property type="term" value="C:endospore-forming forespore"/>
    <property type="evidence" value="ECO:0007669"/>
    <property type="project" value="InterPro"/>
</dbReference>
<dbReference type="GO" id="GO:0030436">
    <property type="term" value="P:asexual sporulation"/>
    <property type="evidence" value="ECO:0007669"/>
    <property type="project" value="UniProtKB-UniRule"/>
</dbReference>
<dbReference type="GO" id="GO:0030435">
    <property type="term" value="P:sporulation resulting in formation of a cellular spore"/>
    <property type="evidence" value="ECO:0007669"/>
    <property type="project" value="UniProtKB-KW"/>
</dbReference>
<dbReference type="HAMAP" id="MF_00665">
    <property type="entry name" value="SspO"/>
    <property type="match status" value="1"/>
</dbReference>
<dbReference type="InterPro" id="IPR012613">
    <property type="entry name" value="SASP_SspO"/>
</dbReference>
<dbReference type="NCBIfam" id="TIGR02864">
    <property type="entry name" value="spore_sspO"/>
    <property type="match status" value="1"/>
</dbReference>
<dbReference type="Pfam" id="PF08175">
    <property type="entry name" value="SspO"/>
    <property type="match status" value="1"/>
</dbReference>
<evidence type="ECO:0000255" key="1">
    <source>
        <dbReference type="HAMAP-Rule" id="MF_00665"/>
    </source>
</evidence>
<evidence type="ECO:0000256" key="2">
    <source>
        <dbReference type="SAM" id="MobiDB-lite"/>
    </source>
</evidence>
<sequence length="49" mass="5390">MGKRKANHTISGMNAASAQGQGAGYNEEFANENLTPAERQNNKKRKKNQ</sequence>
<proteinExistence type="inferred from homology"/>
<gene>
    <name evidence="1" type="primary">sspO</name>
    <name type="synonym">cotK</name>
    <name type="ordered locus">BCE_3636</name>
</gene>
<reference key="1">
    <citation type="journal article" date="2004" name="Nucleic Acids Res.">
        <title>The genome sequence of Bacillus cereus ATCC 10987 reveals metabolic adaptations and a large plasmid related to Bacillus anthracis pXO1.</title>
        <authorList>
            <person name="Rasko D.A."/>
            <person name="Ravel J."/>
            <person name="Oekstad O.A."/>
            <person name="Helgason E."/>
            <person name="Cer R.Z."/>
            <person name="Jiang L."/>
            <person name="Shores K.A."/>
            <person name="Fouts D.E."/>
            <person name="Tourasse N.J."/>
            <person name="Angiuoli S.V."/>
            <person name="Kolonay J.F."/>
            <person name="Nelson W.C."/>
            <person name="Kolstoe A.-B."/>
            <person name="Fraser C.M."/>
            <person name="Read T.D."/>
        </authorList>
    </citation>
    <scope>NUCLEOTIDE SEQUENCE [LARGE SCALE GENOMIC DNA]</scope>
    <source>
        <strain>ATCC 10987 / NRS 248</strain>
    </source>
</reference>
<feature type="chain" id="PRO_0000217204" description="Small, acid-soluble spore protein O">
    <location>
        <begin position="1"/>
        <end position="49"/>
    </location>
</feature>
<feature type="region of interest" description="Disordered" evidence="2">
    <location>
        <begin position="1"/>
        <end position="49"/>
    </location>
</feature>
<feature type="compositionally biased region" description="Polar residues" evidence="2">
    <location>
        <begin position="8"/>
        <end position="20"/>
    </location>
</feature>
<comment type="subcellular location">
    <subcellularLocation>
        <location evidence="1">Spore core</location>
    </subcellularLocation>
</comment>
<comment type="induction">
    <text evidence="1">Expressed only in the forespore compartment of sporulating cells.</text>
</comment>
<comment type="similarity">
    <text evidence="1">Belongs to the SspO family.</text>
</comment>